<proteinExistence type="evidence at protein level"/>
<accession>Q63690</accession>
<accession>Q62995</accession>
<accession>Q64383</accession>
<reference key="1">
    <citation type="journal article" date="1996" name="Genes Dev.">
        <title>The E1B 19K protein blocks apoptosis by interacting with and inhibiting the p53-inducible and death-promoting Bax protein.</title>
        <authorList>
            <person name="Han J."/>
            <person name="Sabbatini P."/>
            <person name="Perez D."/>
            <person name="Rao L."/>
            <person name="Modha D."/>
            <person name="White E."/>
        </authorList>
    </citation>
    <scope>NUCLEOTIDE SEQUENCE [MRNA]</scope>
</reference>
<reference key="2">
    <citation type="journal article" date="1996" name="Neurosci. Lett.">
        <title>Cloning of the 3' end of rat bax-alpha and corresponding developmental down-regulation in differentiating primary, cultured oligodendrocytes.</title>
        <authorList>
            <person name="Madison D.L."/>
            <person name="Pfeiffer S.E."/>
        </authorList>
    </citation>
    <scope>NUCLEOTIDE SEQUENCE [MRNA] OF 75-192</scope>
    <source>
        <tissue>Brain</tissue>
    </source>
</reference>
<reference key="3">
    <citation type="journal article" date="1995" name="Endocrinology">
        <title>Expression of members of the Bcl-2 gene family in the immature rat ovary: equine chorionic gonadotropin-mediated inhibition of granulosa cell apoptosis is associated with decreased Bax and constitutive Bcl-2 and Bcl-xlong messenger ribonucleic acid levels.</title>
        <authorList>
            <person name="Tilly J.L."/>
            <person name="Tilly K.I."/>
            <person name="Kenton M.L."/>
            <person name="Johnson A.L."/>
        </authorList>
    </citation>
    <scope>NUCLEOTIDE SEQUENCE [MRNA] OF 37-169</scope>
    <source>
        <strain>Sprague-Dawley</strain>
        <tissue>Ovary</tissue>
    </source>
</reference>
<reference key="4">
    <citation type="journal article" date="2004" name="Mol. Cell">
        <title>Inhibition of both the extrinsic and intrinsic death pathways through nonhomotypic death-fold interactions.</title>
        <authorList>
            <person name="Nam Y.J."/>
            <person name="Mani K."/>
            <person name="Ashton A.W."/>
            <person name="Peng C.F."/>
            <person name="Krishnamurthy B."/>
            <person name="Hayakawa Y."/>
            <person name="Lee P."/>
            <person name="Korsmeyer S.J."/>
            <person name="Kitsis R.N."/>
        </authorList>
    </citation>
    <scope>INTERACTION WITH NOL3</scope>
</reference>
<evidence type="ECO:0000250" key="1"/>
<evidence type="ECO:0000250" key="2">
    <source>
        <dbReference type="UniProtKB" id="Q07812"/>
    </source>
</evidence>
<evidence type="ECO:0000250" key="3">
    <source>
        <dbReference type="UniProtKB" id="Q07813"/>
    </source>
</evidence>
<evidence type="ECO:0000255" key="4"/>
<evidence type="ECO:0000269" key="5">
    <source>
    </source>
</evidence>
<evidence type="ECO:0000305" key="6"/>
<name>BAX_RAT</name>
<feature type="chain" id="PRO_0000143058" description="Apoptosis regulator BAX">
    <location>
        <begin position="1"/>
        <end position="192"/>
    </location>
</feature>
<feature type="transmembrane region" description="Helical" evidence="4">
    <location>
        <begin position="172"/>
        <end position="192"/>
    </location>
</feature>
<feature type="short sequence motif" description="BH3">
    <location>
        <begin position="59"/>
        <end position="73"/>
    </location>
</feature>
<feature type="short sequence motif" description="BH1">
    <location>
        <begin position="98"/>
        <end position="118"/>
    </location>
</feature>
<feature type="short sequence motif" description="BH2">
    <location>
        <begin position="150"/>
        <end position="165"/>
    </location>
</feature>
<feature type="modified residue" description="N-acetylmethionine" evidence="2">
    <location>
        <position position="1"/>
    </location>
</feature>
<feature type="cross-link" description="Glycyl lysine isopeptide (Lys-Gly) (interchain with G-Cter in ubiquitin)" evidence="2">
    <location>
        <position position="128"/>
    </location>
</feature>
<feature type="cross-link" description="Glycyl lysine isopeptide (Lys-Gly) (interchain with G-Cter in ubiquitin)" evidence="2">
    <location>
        <position position="190"/>
    </location>
</feature>
<feature type="sequence conflict" description="In Ref. 1; AAC26327 and 3; AAA75200/AAC60700." evidence="6" ref="1 3">
    <original>S</original>
    <variation>N</variation>
    <location>
        <position position="72"/>
    </location>
</feature>
<feature type="sequence conflict" description="In Ref. 2; AAC52998." evidence="6" ref="2">
    <original>L</original>
    <variation>M</variation>
    <location>
        <position position="76"/>
    </location>
</feature>
<feature type="sequence conflict" description="In Ref. 2; AAC52998." evidence="6" ref="2">
    <original>C</original>
    <variation>Y</variation>
    <location>
        <position position="126"/>
    </location>
</feature>
<feature type="sequence conflict" description="In Ref. 3; AAA75200/AAC60700." evidence="6" ref="3">
    <original>L</original>
    <variation>F</variation>
    <location>
        <position position="149"/>
    </location>
</feature>
<feature type="sequence conflict" description="In Ref. 1; AAC26327." evidence="6" ref="1">
    <original>D</original>
    <variation>E</variation>
    <location>
        <position position="159"/>
    </location>
</feature>
<dbReference type="EMBL" id="U49729">
    <property type="protein sequence ID" value="AAC26327.1"/>
    <property type="molecule type" value="mRNA"/>
</dbReference>
<dbReference type="EMBL" id="U59184">
    <property type="protein sequence ID" value="AAC52998.1"/>
    <property type="molecule type" value="mRNA"/>
</dbReference>
<dbReference type="EMBL" id="U32098">
    <property type="protein sequence ID" value="AAA75200.1"/>
    <property type="molecule type" value="mRNA"/>
</dbReference>
<dbReference type="EMBL" id="S76511">
    <property type="protein sequence ID" value="AAC60700.2"/>
    <property type="molecule type" value="mRNA"/>
</dbReference>
<dbReference type="PIR" id="I53295">
    <property type="entry name" value="I53295"/>
</dbReference>
<dbReference type="SMR" id="Q63690"/>
<dbReference type="ComplexPortal" id="CPX-2032">
    <property type="entry name" value="BAX oligomer"/>
</dbReference>
<dbReference type="CORUM" id="Q63690"/>
<dbReference type="FunCoup" id="Q63690">
    <property type="interactions" value="1249"/>
</dbReference>
<dbReference type="IntAct" id="Q63690">
    <property type="interactions" value="3"/>
</dbReference>
<dbReference type="MINT" id="Q63690"/>
<dbReference type="STRING" id="10116.ENSRNOP00000028328"/>
<dbReference type="GlyGen" id="Q63690">
    <property type="glycosylation" value="1 site"/>
</dbReference>
<dbReference type="iPTMnet" id="Q63690"/>
<dbReference type="PhosphoSitePlus" id="Q63690"/>
<dbReference type="jPOST" id="Q63690"/>
<dbReference type="PaxDb" id="10116-ENSRNOP00000028328"/>
<dbReference type="ABCD" id="Q63690">
    <property type="antibodies" value="1 sequenced antibody"/>
</dbReference>
<dbReference type="UCSC" id="RGD:2192">
    <molecule id="Q63690-1"/>
    <property type="organism name" value="rat"/>
</dbReference>
<dbReference type="AGR" id="RGD:2192"/>
<dbReference type="RGD" id="2192">
    <property type="gene designation" value="Bax"/>
</dbReference>
<dbReference type="eggNOG" id="KOG4728">
    <property type="taxonomic scope" value="Eukaryota"/>
</dbReference>
<dbReference type="InParanoid" id="Q63690"/>
<dbReference type="PhylomeDB" id="Q63690"/>
<dbReference type="Reactome" id="R-RNO-111457">
    <property type="pathway name" value="Release of apoptotic factors from the mitochondria"/>
</dbReference>
<dbReference type="Reactome" id="R-RNO-114294">
    <property type="pathway name" value="Activation, translocation and oligomerization of BAX"/>
</dbReference>
<dbReference type="Reactome" id="R-RNO-5620971">
    <property type="pathway name" value="Pyroptosis"/>
</dbReference>
<dbReference type="Reactome" id="R-RNO-6804114">
    <property type="pathway name" value="TP53 Regulates Transcription of Genes Involved in G2 Cell Cycle Arrest"/>
</dbReference>
<dbReference type="PRO" id="PR:Q63690"/>
<dbReference type="Proteomes" id="UP000002494">
    <property type="component" value="Unplaced"/>
</dbReference>
<dbReference type="GO" id="GO:0097145">
    <property type="term" value="C:BAK complex"/>
    <property type="evidence" value="ECO:0000266"/>
    <property type="project" value="RGD"/>
</dbReference>
<dbReference type="GO" id="GO:0097144">
    <property type="term" value="C:BAX complex"/>
    <property type="evidence" value="ECO:0000250"/>
    <property type="project" value="UniProtKB"/>
</dbReference>
<dbReference type="GO" id="GO:0097136">
    <property type="term" value="C:Bcl-2 family protein complex"/>
    <property type="evidence" value="ECO:0000250"/>
    <property type="project" value="UniProtKB"/>
</dbReference>
<dbReference type="GO" id="GO:0071944">
    <property type="term" value="C:cell periphery"/>
    <property type="evidence" value="ECO:0000266"/>
    <property type="project" value="RGD"/>
</dbReference>
<dbReference type="GO" id="GO:0005737">
    <property type="term" value="C:cytoplasm"/>
    <property type="evidence" value="ECO:0000314"/>
    <property type="project" value="RGD"/>
</dbReference>
<dbReference type="GO" id="GO:0005829">
    <property type="term" value="C:cytosol"/>
    <property type="evidence" value="ECO:0000314"/>
    <property type="project" value="RGD"/>
</dbReference>
<dbReference type="GO" id="GO:0005783">
    <property type="term" value="C:endoplasmic reticulum"/>
    <property type="evidence" value="ECO:0000266"/>
    <property type="project" value="RGD"/>
</dbReference>
<dbReference type="GO" id="GO:0005789">
    <property type="term" value="C:endoplasmic reticulum membrane"/>
    <property type="evidence" value="ECO:0000250"/>
    <property type="project" value="UniProtKB"/>
</dbReference>
<dbReference type="GO" id="GO:0031966">
    <property type="term" value="C:mitochondrial membrane"/>
    <property type="evidence" value="ECO:0000314"/>
    <property type="project" value="RGD"/>
</dbReference>
<dbReference type="GO" id="GO:0005741">
    <property type="term" value="C:mitochondrial outer membrane"/>
    <property type="evidence" value="ECO:0000314"/>
    <property type="project" value="RGD"/>
</dbReference>
<dbReference type="GO" id="GO:0005757">
    <property type="term" value="C:mitochondrial permeability transition pore complex"/>
    <property type="evidence" value="ECO:0000250"/>
    <property type="project" value="UniProtKB"/>
</dbReference>
<dbReference type="GO" id="GO:0005739">
    <property type="term" value="C:mitochondrion"/>
    <property type="evidence" value="ECO:0000266"/>
    <property type="project" value="RGD"/>
</dbReference>
<dbReference type="GO" id="GO:0005635">
    <property type="term" value="C:nuclear envelope"/>
    <property type="evidence" value="ECO:0000266"/>
    <property type="project" value="RGD"/>
</dbReference>
<dbReference type="GO" id="GO:0005634">
    <property type="term" value="C:nucleus"/>
    <property type="evidence" value="ECO:0000250"/>
    <property type="project" value="UniProtKB"/>
</dbReference>
<dbReference type="GO" id="GO:0048471">
    <property type="term" value="C:perinuclear region of cytoplasm"/>
    <property type="evidence" value="ECO:0000314"/>
    <property type="project" value="RGD"/>
</dbReference>
<dbReference type="GO" id="GO:0005886">
    <property type="term" value="C:plasma membrane"/>
    <property type="evidence" value="ECO:0000314"/>
    <property type="project" value="RGD"/>
</dbReference>
<dbReference type="GO" id="GO:0046930">
    <property type="term" value="C:pore complex"/>
    <property type="evidence" value="ECO:0000250"/>
    <property type="project" value="UniProtKB"/>
</dbReference>
<dbReference type="GO" id="GO:0051400">
    <property type="term" value="F:BH domain binding"/>
    <property type="evidence" value="ECO:0000353"/>
    <property type="project" value="RGD"/>
</dbReference>
<dbReference type="GO" id="GO:0051434">
    <property type="term" value="F:BH3 domain binding"/>
    <property type="evidence" value="ECO:0000250"/>
    <property type="project" value="UniProtKB"/>
</dbReference>
<dbReference type="GO" id="GO:0015267">
    <property type="term" value="F:channel activity"/>
    <property type="evidence" value="ECO:0000250"/>
    <property type="project" value="UniProtKB"/>
</dbReference>
<dbReference type="GO" id="GO:0031072">
    <property type="term" value="F:heat shock protein binding"/>
    <property type="evidence" value="ECO:0000353"/>
    <property type="project" value="RGD"/>
</dbReference>
<dbReference type="GO" id="GO:0030544">
    <property type="term" value="F:Hsp70 protein binding"/>
    <property type="evidence" value="ECO:0000266"/>
    <property type="project" value="RGD"/>
</dbReference>
<dbReference type="GO" id="GO:0042802">
    <property type="term" value="F:identical protein binding"/>
    <property type="evidence" value="ECO:0000266"/>
    <property type="project" value="RGD"/>
</dbReference>
<dbReference type="GO" id="GO:0008289">
    <property type="term" value="F:lipid binding"/>
    <property type="evidence" value="ECO:0000250"/>
    <property type="project" value="UniProtKB"/>
</dbReference>
<dbReference type="GO" id="GO:0046982">
    <property type="term" value="F:protein heterodimerization activity"/>
    <property type="evidence" value="ECO:0000266"/>
    <property type="project" value="RGD"/>
</dbReference>
<dbReference type="GO" id="GO:0042803">
    <property type="term" value="F:protein homodimerization activity"/>
    <property type="evidence" value="ECO:0000266"/>
    <property type="project" value="RGD"/>
</dbReference>
<dbReference type="GO" id="GO:0044877">
    <property type="term" value="F:protein-containing complex binding"/>
    <property type="evidence" value="ECO:0000353"/>
    <property type="project" value="RGD"/>
</dbReference>
<dbReference type="GO" id="GO:0051087">
    <property type="term" value="F:protein-folding chaperone binding"/>
    <property type="evidence" value="ECO:0000353"/>
    <property type="project" value="RGD"/>
</dbReference>
<dbReference type="GO" id="GO:0008637">
    <property type="term" value="P:apoptotic mitochondrial changes"/>
    <property type="evidence" value="ECO:0000250"/>
    <property type="project" value="UniProtKB"/>
</dbReference>
<dbReference type="GO" id="GO:0006915">
    <property type="term" value="P:apoptotic process"/>
    <property type="evidence" value="ECO:0000266"/>
    <property type="project" value="RGD"/>
</dbReference>
<dbReference type="GO" id="GO:1902262">
    <property type="term" value="P:apoptotic process involved in blood vessel morphogenesis"/>
    <property type="evidence" value="ECO:0000266"/>
    <property type="project" value="RGD"/>
</dbReference>
<dbReference type="GO" id="GO:1902263">
    <property type="term" value="P:apoptotic process involved in embryonic digit morphogenesis"/>
    <property type="evidence" value="ECO:0000266"/>
    <property type="project" value="RGD"/>
</dbReference>
<dbReference type="GO" id="GO:0060057">
    <property type="term" value="P:apoptotic process involved in mammary gland involution"/>
    <property type="evidence" value="ECO:0000266"/>
    <property type="project" value="RGD"/>
</dbReference>
<dbReference type="GO" id="GO:0097190">
    <property type="term" value="P:apoptotic signaling pathway"/>
    <property type="evidence" value="ECO:0000250"/>
    <property type="project" value="UniProtKB"/>
</dbReference>
<dbReference type="GO" id="GO:0001783">
    <property type="term" value="P:B cell apoptotic process"/>
    <property type="evidence" value="ECO:0000250"/>
    <property type="project" value="UniProtKB"/>
</dbReference>
<dbReference type="GO" id="GO:0001782">
    <property type="term" value="P:B cell homeostasis"/>
    <property type="evidence" value="ECO:0000266"/>
    <property type="project" value="RGD"/>
</dbReference>
<dbReference type="GO" id="GO:0002358">
    <property type="term" value="P:B cell homeostatic proliferation"/>
    <property type="evidence" value="ECO:0000266"/>
    <property type="project" value="RGD"/>
</dbReference>
<dbReference type="GO" id="GO:0002352">
    <property type="term" value="P:B cell negative selection"/>
    <property type="evidence" value="ECO:0000266"/>
    <property type="project" value="RGD"/>
</dbReference>
<dbReference type="GO" id="GO:1990117">
    <property type="term" value="P:B cell receptor apoptotic signaling pathway"/>
    <property type="evidence" value="ECO:0000266"/>
    <property type="project" value="RGD"/>
</dbReference>
<dbReference type="GO" id="GO:0001974">
    <property type="term" value="P:blood vessel remodeling"/>
    <property type="evidence" value="ECO:0000266"/>
    <property type="project" value="RGD"/>
</dbReference>
<dbReference type="GO" id="GO:0060402">
    <property type="term" value="P:calcium ion transport into cytosol"/>
    <property type="evidence" value="ECO:0000266"/>
    <property type="project" value="RGD"/>
</dbReference>
<dbReference type="GO" id="GO:0008283">
    <property type="term" value="P:cell population proliferation"/>
    <property type="evidence" value="ECO:0000266"/>
    <property type="project" value="RGD"/>
</dbReference>
<dbReference type="GO" id="GO:0045333">
    <property type="term" value="P:cellular respiration"/>
    <property type="evidence" value="ECO:0000314"/>
    <property type="project" value="RGD"/>
</dbReference>
<dbReference type="GO" id="GO:0070301">
    <property type="term" value="P:cellular response to hydrogen peroxide"/>
    <property type="evidence" value="ECO:0000270"/>
    <property type="project" value="RGD"/>
</dbReference>
<dbReference type="GO" id="GO:0034644">
    <property type="term" value="P:cellular response to UV"/>
    <property type="evidence" value="ECO:0000266"/>
    <property type="project" value="RGD"/>
</dbReference>
<dbReference type="GO" id="GO:0098586">
    <property type="term" value="P:cellular response to virus"/>
    <property type="evidence" value="ECO:0000266"/>
    <property type="project" value="RGD"/>
</dbReference>
<dbReference type="GO" id="GO:0021987">
    <property type="term" value="P:cerebral cortex development"/>
    <property type="evidence" value="ECO:0000270"/>
    <property type="project" value="RGD"/>
</dbReference>
<dbReference type="GO" id="GO:0045136">
    <property type="term" value="P:development of secondary sexual characteristics"/>
    <property type="evidence" value="ECO:0000266"/>
    <property type="project" value="RGD"/>
</dbReference>
<dbReference type="GO" id="GO:0006974">
    <property type="term" value="P:DNA damage response"/>
    <property type="evidence" value="ECO:0000266"/>
    <property type="project" value="RGD"/>
</dbReference>
<dbReference type="GO" id="GO:0035234">
    <property type="term" value="P:ectopic germ cell programmed cell death"/>
    <property type="evidence" value="ECO:0000266"/>
    <property type="project" value="RGD"/>
</dbReference>
<dbReference type="GO" id="GO:1904019">
    <property type="term" value="P:epithelial cell apoptotic process"/>
    <property type="evidence" value="ECO:0000266"/>
    <property type="project" value="RGD"/>
</dbReference>
<dbReference type="GO" id="GO:0050673">
    <property type="term" value="P:epithelial cell proliferation"/>
    <property type="evidence" value="ECO:0000266"/>
    <property type="project" value="RGD"/>
</dbReference>
<dbReference type="GO" id="GO:0051649">
    <property type="term" value="P:establishment of localization in cell"/>
    <property type="evidence" value="ECO:0000266"/>
    <property type="project" value="RGD"/>
</dbReference>
<dbReference type="GO" id="GO:0010248">
    <property type="term" value="P:establishment or maintenance of transmembrane electrochemical gradient"/>
    <property type="evidence" value="ECO:0000250"/>
    <property type="project" value="UniProtKB"/>
</dbReference>
<dbReference type="GO" id="GO:0097194">
    <property type="term" value="P:execution phase of apoptosis"/>
    <property type="evidence" value="ECO:0000266"/>
    <property type="project" value="RGD"/>
</dbReference>
<dbReference type="GO" id="GO:0097191">
    <property type="term" value="P:extrinsic apoptotic signaling pathway"/>
    <property type="evidence" value="ECO:0000266"/>
    <property type="project" value="RGD"/>
</dbReference>
<dbReference type="GO" id="GO:0097192">
    <property type="term" value="P:extrinsic apoptotic signaling pathway in absence of ligand"/>
    <property type="evidence" value="ECO:0000266"/>
    <property type="project" value="RGD"/>
</dbReference>
<dbReference type="GO" id="GO:0008625">
    <property type="term" value="P:extrinsic apoptotic signaling pathway via death domain receptors"/>
    <property type="evidence" value="ECO:0000266"/>
    <property type="project" value="RGD"/>
</dbReference>
<dbReference type="GO" id="GO:0009566">
    <property type="term" value="P:fertilization"/>
    <property type="evidence" value="ECO:0000266"/>
    <property type="project" value="RGD"/>
</dbReference>
<dbReference type="GO" id="GO:0007281">
    <property type="term" value="P:germ cell development"/>
    <property type="evidence" value="ECO:0000266"/>
    <property type="project" value="RGD"/>
</dbReference>
<dbReference type="GO" id="GO:0034349">
    <property type="term" value="P:glial cell apoptotic process"/>
    <property type="evidence" value="ECO:0000270"/>
    <property type="project" value="RGD"/>
</dbReference>
<dbReference type="GO" id="GO:0006687">
    <property type="term" value="P:glycosphingolipid metabolic process"/>
    <property type="evidence" value="ECO:0000266"/>
    <property type="project" value="RGD"/>
</dbReference>
<dbReference type="GO" id="GO:0048872">
    <property type="term" value="P:homeostasis of number of cells"/>
    <property type="evidence" value="ECO:0000266"/>
    <property type="project" value="RGD"/>
</dbReference>
<dbReference type="GO" id="GO:0048873">
    <property type="term" value="P:homeostasis of number of cells within a tissue"/>
    <property type="evidence" value="ECO:0000266"/>
    <property type="project" value="RGD"/>
</dbReference>
<dbReference type="GO" id="GO:0021854">
    <property type="term" value="P:hypothalamus development"/>
    <property type="evidence" value="ECO:0000266"/>
    <property type="project" value="RGD"/>
</dbReference>
<dbReference type="GO" id="GO:0007007">
    <property type="term" value="P:inner mitochondrial membrane organization"/>
    <property type="evidence" value="ECO:0000314"/>
    <property type="project" value="RGD"/>
</dbReference>
<dbReference type="GO" id="GO:0097193">
    <property type="term" value="P:intrinsic apoptotic signaling pathway"/>
    <property type="evidence" value="ECO:0000250"/>
    <property type="project" value="UniProtKB"/>
</dbReference>
<dbReference type="GO" id="GO:0072332">
    <property type="term" value="P:intrinsic apoptotic signaling pathway by p53 class mediator"/>
    <property type="evidence" value="ECO:0000266"/>
    <property type="project" value="RGD"/>
</dbReference>
<dbReference type="GO" id="GO:0008630">
    <property type="term" value="P:intrinsic apoptotic signaling pathway in response to DNA damage"/>
    <property type="evidence" value="ECO:0000250"/>
    <property type="project" value="UniProtKB"/>
</dbReference>
<dbReference type="GO" id="GO:0070059">
    <property type="term" value="P:intrinsic apoptotic signaling pathway in response to endoplasmic reticulum stress"/>
    <property type="evidence" value="ECO:0000266"/>
    <property type="project" value="RGD"/>
</dbReference>
<dbReference type="GO" id="GO:0001822">
    <property type="term" value="P:kidney development"/>
    <property type="evidence" value="ECO:0000266"/>
    <property type="project" value="RGD"/>
</dbReference>
<dbReference type="GO" id="GO:0001776">
    <property type="term" value="P:leukocyte homeostasis"/>
    <property type="evidence" value="ECO:0000266"/>
    <property type="project" value="RGD"/>
</dbReference>
<dbReference type="GO" id="GO:0035108">
    <property type="term" value="P:limb morphogenesis"/>
    <property type="evidence" value="ECO:0000266"/>
    <property type="project" value="RGD"/>
</dbReference>
<dbReference type="GO" id="GO:0008584">
    <property type="term" value="P:male gonad development"/>
    <property type="evidence" value="ECO:0000266"/>
    <property type="project" value="RGD"/>
</dbReference>
<dbReference type="GO" id="GO:0043653">
    <property type="term" value="P:mitochondrial fragmentation involved in apoptotic process"/>
    <property type="evidence" value="ECO:0000250"/>
    <property type="project" value="UniProtKB"/>
</dbReference>
<dbReference type="GO" id="GO:0008053">
    <property type="term" value="P:mitochondrial fusion"/>
    <property type="evidence" value="ECO:0000250"/>
    <property type="project" value="UniProtKB"/>
</dbReference>
<dbReference type="GO" id="GO:0007005">
    <property type="term" value="P:mitochondrion organization"/>
    <property type="evidence" value="ECO:0000266"/>
    <property type="project" value="RGD"/>
</dbReference>
<dbReference type="GO" id="GO:0097049">
    <property type="term" value="P:motor neuron apoptotic process"/>
    <property type="evidence" value="ECO:0000266"/>
    <property type="project" value="RGD"/>
</dbReference>
<dbReference type="GO" id="GO:0002262">
    <property type="term" value="P:myeloid cell homeostasis"/>
    <property type="evidence" value="ECO:0000266"/>
    <property type="project" value="RGD"/>
</dbReference>
<dbReference type="GO" id="GO:2001234">
    <property type="term" value="P:negative regulation of apoptotic signaling pathway"/>
    <property type="evidence" value="ECO:0000266"/>
    <property type="project" value="RGD"/>
</dbReference>
<dbReference type="GO" id="GO:0008285">
    <property type="term" value="P:negative regulation of cell population proliferation"/>
    <property type="evidence" value="ECO:0000266"/>
    <property type="project" value="RGD"/>
</dbReference>
<dbReference type="GO" id="GO:0032471">
    <property type="term" value="P:negative regulation of endoplasmic reticulum calcium ion concentration"/>
    <property type="evidence" value="ECO:0000266"/>
    <property type="project" value="RGD"/>
</dbReference>
<dbReference type="GO" id="GO:0048147">
    <property type="term" value="P:negative regulation of fibroblast proliferation"/>
    <property type="evidence" value="ECO:0000266"/>
    <property type="project" value="RGD"/>
</dbReference>
<dbReference type="GO" id="GO:0010917">
    <property type="term" value="P:negative regulation of mitochondrial membrane potential"/>
    <property type="evidence" value="ECO:0000250"/>
    <property type="project" value="UniProtKB"/>
</dbReference>
<dbReference type="GO" id="GO:0043524">
    <property type="term" value="P:negative regulation of neuron apoptotic process"/>
    <property type="evidence" value="ECO:0000266"/>
    <property type="project" value="RGD"/>
</dbReference>
<dbReference type="GO" id="GO:0032091">
    <property type="term" value="P:negative regulation of protein binding"/>
    <property type="evidence" value="ECO:0000250"/>
    <property type="project" value="UniProtKB"/>
</dbReference>
<dbReference type="GO" id="GO:0007399">
    <property type="term" value="P:nervous system development"/>
    <property type="evidence" value="ECO:0000266"/>
    <property type="project" value="RGD"/>
</dbReference>
<dbReference type="GO" id="GO:0051402">
    <property type="term" value="P:neuron apoptotic process"/>
    <property type="evidence" value="ECO:0000266"/>
    <property type="project" value="RGD"/>
</dbReference>
<dbReference type="GO" id="GO:0001764">
    <property type="term" value="P:neuron migration"/>
    <property type="evidence" value="ECO:0000266"/>
    <property type="project" value="RGD"/>
</dbReference>
<dbReference type="GO" id="GO:0042475">
    <property type="term" value="P:odontogenesis of dentin-containing tooth"/>
    <property type="evidence" value="ECO:0000266"/>
    <property type="project" value="RGD"/>
</dbReference>
<dbReference type="GO" id="GO:0007008">
    <property type="term" value="P:outer mitochondrial membrane organization"/>
    <property type="evidence" value="ECO:0000314"/>
    <property type="project" value="RGD"/>
</dbReference>
<dbReference type="GO" id="GO:0001541">
    <property type="term" value="P:ovarian follicle development"/>
    <property type="evidence" value="ECO:0000270"/>
    <property type="project" value="RGD"/>
</dbReference>
<dbReference type="GO" id="GO:1902512">
    <property type="term" value="P:positive regulation of apoptotic DNA fragmentation"/>
    <property type="evidence" value="ECO:0000266"/>
    <property type="project" value="RGD"/>
</dbReference>
<dbReference type="GO" id="GO:0043065">
    <property type="term" value="P:positive regulation of apoptotic process"/>
    <property type="evidence" value="ECO:0000314"/>
    <property type="project" value="UniProtKB"/>
</dbReference>
<dbReference type="GO" id="GO:0060058">
    <property type="term" value="P:positive regulation of apoptotic process involved in mammary gland involution"/>
    <property type="evidence" value="ECO:0000266"/>
    <property type="project" value="RGD"/>
</dbReference>
<dbReference type="GO" id="GO:0002904">
    <property type="term" value="P:positive regulation of B cell apoptotic process"/>
    <property type="evidence" value="ECO:0000266"/>
    <property type="project" value="RGD"/>
</dbReference>
<dbReference type="GO" id="GO:0010524">
    <property type="term" value="P:positive regulation of calcium ion transport into cytosol"/>
    <property type="evidence" value="ECO:0000266"/>
    <property type="project" value="RGD"/>
</dbReference>
<dbReference type="GO" id="GO:0048087">
    <property type="term" value="P:positive regulation of developmental pigmentation"/>
    <property type="evidence" value="ECO:0000266"/>
    <property type="project" value="RGD"/>
</dbReference>
<dbReference type="GO" id="GO:0051094">
    <property type="term" value="P:positive regulation of developmental process"/>
    <property type="evidence" value="ECO:0000266"/>
    <property type="project" value="RGD"/>
</dbReference>
<dbReference type="GO" id="GO:1904037">
    <property type="term" value="P:positive regulation of epithelial cell apoptotic process"/>
    <property type="evidence" value="ECO:0000266"/>
    <property type="project" value="RGD"/>
</dbReference>
<dbReference type="GO" id="GO:2001244">
    <property type="term" value="P:positive regulation of intrinsic apoptotic signaling pathway"/>
    <property type="evidence" value="ECO:0000250"/>
    <property type="project" value="UniProtKB"/>
</dbReference>
<dbReference type="GO" id="GO:1902110">
    <property type="term" value="P:positive regulation of mitochondrial membrane permeability involved in apoptotic process"/>
    <property type="evidence" value="ECO:0000266"/>
    <property type="project" value="RGD"/>
</dbReference>
<dbReference type="GO" id="GO:2000673">
    <property type="term" value="P:positive regulation of motor neuron apoptotic process"/>
    <property type="evidence" value="ECO:0000266"/>
    <property type="project" value="RGD"/>
</dbReference>
<dbReference type="GO" id="GO:0043525">
    <property type="term" value="P:positive regulation of neuron apoptotic process"/>
    <property type="evidence" value="ECO:0000250"/>
    <property type="project" value="UniProtKB"/>
</dbReference>
<dbReference type="GO" id="GO:0031334">
    <property type="term" value="P:positive regulation of protein-containing complex assembly"/>
    <property type="evidence" value="ECO:0000250"/>
    <property type="project" value="UniProtKB"/>
</dbReference>
<dbReference type="GO" id="GO:0090200">
    <property type="term" value="P:positive regulation of release of cytochrome c from mitochondria"/>
    <property type="evidence" value="ECO:0000250"/>
    <property type="project" value="UniProtKB"/>
</dbReference>
<dbReference type="GO" id="GO:0051281">
    <property type="term" value="P:positive regulation of release of sequestered calcium ion into cytosol"/>
    <property type="evidence" value="ECO:0000266"/>
    <property type="project" value="RGD"/>
</dbReference>
<dbReference type="GO" id="GO:2000243">
    <property type="term" value="P:positive regulation of reproductive process"/>
    <property type="evidence" value="ECO:0000266"/>
    <property type="project" value="RGD"/>
</dbReference>
<dbReference type="GO" id="GO:0048597">
    <property type="term" value="P:post-embryonic camera-type eye morphogenesis"/>
    <property type="evidence" value="ECO:0000266"/>
    <property type="project" value="RGD"/>
</dbReference>
<dbReference type="GO" id="GO:0009791">
    <property type="term" value="P:post-embryonic development"/>
    <property type="evidence" value="ECO:0000266"/>
    <property type="project" value="RGD"/>
</dbReference>
<dbReference type="GO" id="GO:0051204">
    <property type="term" value="P:protein insertion into mitochondrial membrane"/>
    <property type="evidence" value="ECO:0000266"/>
    <property type="project" value="RGD"/>
</dbReference>
<dbReference type="GO" id="GO:0042981">
    <property type="term" value="P:regulation of apoptotic process"/>
    <property type="evidence" value="ECO:0000266"/>
    <property type="project" value="RGD"/>
</dbReference>
<dbReference type="GO" id="GO:0051726">
    <property type="term" value="P:regulation of cell cycle"/>
    <property type="evidence" value="ECO:0000266"/>
    <property type="project" value="RGD"/>
</dbReference>
<dbReference type="GO" id="GO:0033599">
    <property type="term" value="P:regulation of mammary gland epithelial cell proliferation"/>
    <property type="evidence" value="ECO:0000266"/>
    <property type="project" value="RGD"/>
</dbReference>
<dbReference type="GO" id="GO:1902108">
    <property type="term" value="P:regulation of mitochondrial membrane permeability involved in apoptotic process"/>
    <property type="evidence" value="ECO:0000266"/>
    <property type="project" value="RGD"/>
</dbReference>
<dbReference type="GO" id="GO:1902445">
    <property type="term" value="P:regulation of mitochondrial membrane permeability involved in programmed necrotic cell death"/>
    <property type="evidence" value="ECO:0000266"/>
    <property type="project" value="RGD"/>
</dbReference>
<dbReference type="GO" id="GO:0051881">
    <property type="term" value="P:regulation of mitochondrial membrane potential"/>
    <property type="evidence" value="ECO:0000250"/>
    <property type="project" value="UniProtKB"/>
</dbReference>
<dbReference type="GO" id="GO:0043523">
    <property type="term" value="P:regulation of neuron apoptotic process"/>
    <property type="evidence" value="ECO:0000266"/>
    <property type="project" value="RGD"/>
</dbReference>
<dbReference type="GO" id="GO:0006808">
    <property type="term" value="P:regulation of nitrogen utilization"/>
    <property type="evidence" value="ECO:0000266"/>
    <property type="project" value="RGD"/>
</dbReference>
<dbReference type="GO" id="GO:0001836">
    <property type="term" value="P:release of cytochrome c from mitochondria"/>
    <property type="evidence" value="ECO:0000314"/>
    <property type="project" value="RGD"/>
</dbReference>
<dbReference type="GO" id="GO:0032976">
    <property type="term" value="P:release of matrix enzymes from mitochondria"/>
    <property type="evidence" value="ECO:0000250"/>
    <property type="project" value="UniProtKB"/>
</dbReference>
<dbReference type="GO" id="GO:0051209">
    <property type="term" value="P:release of sequestered calcium ion into cytosol"/>
    <property type="evidence" value="ECO:0000266"/>
    <property type="project" value="RGD"/>
</dbReference>
<dbReference type="GO" id="GO:0072347">
    <property type="term" value="P:response to anesthetic"/>
    <property type="evidence" value="ECO:0000270"/>
    <property type="project" value="RGD"/>
</dbReference>
<dbReference type="GO" id="GO:0048678">
    <property type="term" value="P:response to axon injury"/>
    <property type="evidence" value="ECO:0000266"/>
    <property type="project" value="RGD"/>
</dbReference>
<dbReference type="GO" id="GO:0042220">
    <property type="term" value="P:response to cocaine"/>
    <property type="evidence" value="ECO:0000270"/>
    <property type="project" value="RGD"/>
</dbReference>
<dbReference type="GO" id="GO:0046688">
    <property type="term" value="P:response to copper ion"/>
    <property type="evidence" value="ECO:0000270"/>
    <property type="project" value="RGD"/>
</dbReference>
<dbReference type="GO" id="GO:0051412">
    <property type="term" value="P:response to corticosterone"/>
    <property type="evidence" value="ECO:0000270"/>
    <property type="project" value="RGD"/>
</dbReference>
<dbReference type="GO" id="GO:0010332">
    <property type="term" value="P:response to gamma radiation"/>
    <property type="evidence" value="ECO:0000266"/>
    <property type="project" value="RGD"/>
</dbReference>
<dbReference type="GO" id="GO:0001666">
    <property type="term" value="P:response to hypoxia"/>
    <property type="evidence" value="ECO:0000270"/>
    <property type="project" value="RGD"/>
</dbReference>
<dbReference type="GO" id="GO:0010212">
    <property type="term" value="P:response to ionizing radiation"/>
    <property type="evidence" value="ECO:0000266"/>
    <property type="project" value="RGD"/>
</dbReference>
<dbReference type="GO" id="GO:0002931">
    <property type="term" value="P:response to ischemia"/>
    <property type="evidence" value="ECO:0000270"/>
    <property type="project" value="RGD"/>
</dbReference>
<dbReference type="GO" id="GO:0009651">
    <property type="term" value="P:response to salt stress"/>
    <property type="evidence" value="ECO:0000266"/>
    <property type="project" value="RGD"/>
</dbReference>
<dbReference type="GO" id="GO:0009636">
    <property type="term" value="P:response to toxic substance"/>
    <property type="evidence" value="ECO:0000250"/>
    <property type="project" value="UniProtKB"/>
</dbReference>
<dbReference type="GO" id="GO:0009611">
    <property type="term" value="P:response to wounding"/>
    <property type="evidence" value="ECO:0000266"/>
    <property type="project" value="RGD"/>
</dbReference>
<dbReference type="GO" id="GO:0009410">
    <property type="term" value="P:response to xenobiotic stimulus"/>
    <property type="evidence" value="ECO:0000270"/>
    <property type="project" value="RGD"/>
</dbReference>
<dbReference type="GO" id="GO:0060041">
    <property type="term" value="P:retina development in camera-type eye"/>
    <property type="evidence" value="ECO:0000266"/>
    <property type="project" value="RGD"/>
</dbReference>
<dbReference type="GO" id="GO:0046666">
    <property type="term" value="P:retinal cell programmed cell death"/>
    <property type="evidence" value="ECO:0000266"/>
    <property type="project" value="RGD"/>
</dbReference>
<dbReference type="GO" id="GO:0060011">
    <property type="term" value="P:Sertoli cell proliferation"/>
    <property type="evidence" value="ECO:0000266"/>
    <property type="project" value="RGD"/>
</dbReference>
<dbReference type="GO" id="GO:0007548">
    <property type="term" value="P:sex differentiation"/>
    <property type="evidence" value="ECO:0000266"/>
    <property type="project" value="RGD"/>
</dbReference>
<dbReference type="GO" id="GO:0048515">
    <property type="term" value="P:spermatid differentiation"/>
    <property type="evidence" value="ECO:0000266"/>
    <property type="project" value="RGD"/>
</dbReference>
<dbReference type="GO" id="GO:0007283">
    <property type="term" value="P:spermatogenesis"/>
    <property type="evidence" value="ECO:0000266"/>
    <property type="project" value="RGD"/>
</dbReference>
<dbReference type="GO" id="GO:0097435">
    <property type="term" value="P:supramolecular fiber organization"/>
    <property type="evidence" value="ECO:0000266"/>
    <property type="project" value="RGD"/>
</dbReference>
<dbReference type="GO" id="GO:0001777">
    <property type="term" value="P:T cell homeostatic proliferation"/>
    <property type="evidence" value="ECO:0000266"/>
    <property type="project" value="RGD"/>
</dbReference>
<dbReference type="GO" id="GO:0070242">
    <property type="term" value="P:thymocyte apoptotic process"/>
    <property type="evidence" value="ECO:0000266"/>
    <property type="project" value="RGD"/>
</dbReference>
<dbReference type="GO" id="GO:0060068">
    <property type="term" value="P:vagina development"/>
    <property type="evidence" value="ECO:0000266"/>
    <property type="project" value="RGD"/>
</dbReference>
<dbReference type="CDD" id="cd06845">
    <property type="entry name" value="Bcl-2_like"/>
    <property type="match status" value="1"/>
</dbReference>
<dbReference type="FunFam" id="1.10.437.10:FF:000004">
    <property type="entry name" value="apoptosis regulator BAX isoform X2"/>
    <property type="match status" value="1"/>
</dbReference>
<dbReference type="Gene3D" id="1.10.437.10">
    <property type="entry name" value="Blc2-like"/>
    <property type="match status" value="1"/>
</dbReference>
<dbReference type="InterPro" id="IPR036834">
    <property type="entry name" value="Bcl-2-like_sf"/>
</dbReference>
<dbReference type="InterPro" id="IPR046371">
    <property type="entry name" value="Bcl-2_BH1-3"/>
</dbReference>
<dbReference type="InterPro" id="IPR026298">
    <property type="entry name" value="Bcl-2_fam"/>
</dbReference>
<dbReference type="InterPro" id="IPR002475">
    <property type="entry name" value="Bcl2-like"/>
</dbReference>
<dbReference type="InterPro" id="IPR020717">
    <property type="entry name" value="Bcl2_BH1_motif_CS"/>
</dbReference>
<dbReference type="InterPro" id="IPR020726">
    <property type="entry name" value="Bcl2_BH2_motif_CS"/>
</dbReference>
<dbReference type="InterPro" id="IPR020728">
    <property type="entry name" value="Bcl2_BH3_motif_CS"/>
</dbReference>
<dbReference type="PANTHER" id="PTHR11256:SF42">
    <property type="entry name" value="APOPTOSIS REGULATOR BAX"/>
    <property type="match status" value="1"/>
</dbReference>
<dbReference type="PANTHER" id="PTHR11256">
    <property type="entry name" value="BCL-2 RELATED"/>
    <property type="match status" value="1"/>
</dbReference>
<dbReference type="Pfam" id="PF00452">
    <property type="entry name" value="Bcl-2"/>
    <property type="match status" value="1"/>
</dbReference>
<dbReference type="PRINTS" id="PR01862">
    <property type="entry name" value="BCL2FAMILY"/>
</dbReference>
<dbReference type="SMART" id="SM00337">
    <property type="entry name" value="BCL"/>
    <property type="match status" value="1"/>
</dbReference>
<dbReference type="SUPFAM" id="SSF56854">
    <property type="entry name" value="Bcl-2 inhibitors of programmed cell death"/>
    <property type="match status" value="1"/>
</dbReference>
<dbReference type="PROSITE" id="PS50062">
    <property type="entry name" value="BCL2_FAMILY"/>
    <property type="match status" value="1"/>
</dbReference>
<dbReference type="PROSITE" id="PS01080">
    <property type="entry name" value="BH1"/>
    <property type="match status" value="1"/>
</dbReference>
<dbReference type="PROSITE" id="PS01258">
    <property type="entry name" value="BH2"/>
    <property type="match status" value="1"/>
</dbReference>
<dbReference type="PROSITE" id="PS01259">
    <property type="entry name" value="BH3"/>
    <property type="match status" value="1"/>
</dbReference>
<organism>
    <name type="scientific">Rattus norvegicus</name>
    <name type="common">Rat</name>
    <dbReference type="NCBI Taxonomy" id="10116"/>
    <lineage>
        <taxon>Eukaryota</taxon>
        <taxon>Metazoa</taxon>
        <taxon>Chordata</taxon>
        <taxon>Craniata</taxon>
        <taxon>Vertebrata</taxon>
        <taxon>Euteleostomi</taxon>
        <taxon>Mammalia</taxon>
        <taxon>Eutheria</taxon>
        <taxon>Euarchontoglires</taxon>
        <taxon>Glires</taxon>
        <taxon>Rodentia</taxon>
        <taxon>Myomorpha</taxon>
        <taxon>Muroidea</taxon>
        <taxon>Muridae</taxon>
        <taxon>Murinae</taxon>
        <taxon>Rattus</taxon>
    </lineage>
</organism>
<gene>
    <name type="primary">Bax</name>
</gene>
<protein>
    <recommendedName>
        <fullName>Apoptosis regulator BAX</fullName>
    </recommendedName>
</protein>
<keyword id="KW-0007">Acetylation</keyword>
<keyword id="KW-0025">Alternative splicing</keyword>
<keyword id="KW-0053">Apoptosis</keyword>
<keyword id="KW-0963">Cytoplasm</keyword>
<keyword id="KW-1017">Isopeptide bond</keyword>
<keyword id="KW-0472">Membrane</keyword>
<keyword id="KW-0496">Mitochondrion</keyword>
<keyword id="KW-1000">Mitochondrion outer membrane</keyword>
<keyword id="KW-0539">Nucleus</keyword>
<keyword id="KW-1185">Reference proteome</keyword>
<keyword id="KW-0812">Transmembrane</keyword>
<keyword id="KW-1133">Transmembrane helix</keyword>
<keyword id="KW-0832">Ubl conjugation</keyword>
<comment type="function">
    <text evidence="2">Accelerates programmed cell death by binding to, and antagonizing the apoptosis repressor BCL2 or its adenovirus homolog E1B 19k protein. Under stress conditions, undergoes a conformation change that causes translocation to the mitochondrion membrane, leading to the release of cytochrome c that then triggers apoptosis. Promotes activation of CASP3, and thereby apoptosis.</text>
</comment>
<comment type="subunit">
    <text evidence="2 3 5">Homodimer. Forms higher oligomers under stress conditions. Forms heterooligomers with BAK. Interacts with BCL2L11. Interaction with BCL2L11 promotes BAX oligomerization and association with mitochondrial membranes, with subsequent release of cytochrome c. Forms heterodimers with BCL2, E1B 19K protein, BCL2L1 isoform Bcl-X(L), BCL2L2, MCL1 and A1. Interacts with SH3GLB1. Interacts with SFN and YWHAZ; the interaction occurs in the cytoplasm. Under stress conditions, JNK-mediated phosphorylation of SFN and YWHAZ, releases BAX to mitochondria. Interacts with RNF144B, which regulates the ubiquitin-dependent stability of BAX. Interacts with CLU under stress conditions that cause a conformation change leading to BAX oligomerization and association with mitochondria. Does not interact with CLU in unstressed cells (By similarity). Interacts with FAIM2/LFG2 (By similarity). Interacts with BOP (By similarity). Interacts (via a C-terminal 33 residues) with NOL3 (via CARD domain); inhibits BAX activation and translocationand consequently cytochrome c release from mitochondria (PubMed:15383280). Interacts with GIMAP3/IAN4 and GIMAP5/IAN5; this interaction is increased, when cells initiate apoptosis upon IL2 withdrawal (By similarity). Interacts with IRF3; the interaction is direct and, upon virus infection, mediates the formation of the apoptosis complex TOMM70:HSP90AA1:IRF3:BAX (By similarity). Interacts with MOAP1, facilitating BAX-dependent mitochondrial outer membrane permeabilization and apoptosis (By similarity). Interacts with BCL2L10/BCL-B (By similarity). Interacts with non-acetylated XRCC6/Ku70; this interaction leads to BAX sequestration in the cytosol, away from the mitochondria, preventing BAX-mediated apoptosis (By similarity).</text>
</comment>
<comment type="interaction">
    <interactant intactId="EBI-822405">
        <id>Q63690</id>
    </interactant>
    <interactant intactId="EBI-432091">
        <id>P63039</id>
        <label>Hspd1</label>
    </interactant>
    <organismsDiffer>false</organismsDiffer>
    <experiments>2</experiments>
</comment>
<comment type="subcellular location">
    <molecule>Isoform Alpha</molecule>
    <subcellularLocation>
        <location evidence="2">Mitochondrion outer membrane</location>
        <topology evidence="4">Single-pass membrane protein</topology>
    </subcellularLocation>
    <subcellularLocation>
        <location evidence="2">Cytoplasm</location>
    </subcellularLocation>
    <subcellularLocation>
        <location evidence="2">Nucleus</location>
    </subcellularLocation>
    <text evidence="2">Colocalizes with 14-3-3 proteins in the cytoplasm. Under stress conditions, undergoes a conformation change that causes release from JNK-phosphorylated 14-3-3 proteins and translocation to the mitochondrion membrane (By similarity).</text>
</comment>
<comment type="subcellular location">
    <molecule>Isoform Beta</molecule>
    <subcellularLocation>
        <location evidence="1">Cytoplasm</location>
    </subcellularLocation>
</comment>
<comment type="subcellular location">
    <molecule>Isoform Gamma</molecule>
    <subcellularLocation>
        <location evidence="1">Cytoplasm</location>
    </subcellularLocation>
</comment>
<comment type="alternative products">
    <event type="alternative splicing"/>
    <isoform>
        <id>Q63690-1</id>
        <name>Alpha</name>
        <name>21 kDa</name>
        <sequence type="displayed"/>
    </isoform>
    <isoform>
        <id>Q63690-2</id>
        <name>Beta</name>
        <sequence type="not described"/>
    </isoform>
    <isoform>
        <id>Q63690-3</id>
        <name>Gamma</name>
        <sequence type="not described"/>
    </isoform>
</comment>
<comment type="tissue specificity">
    <text>Expressed in a wide variety of tissues, with highest levels in the testis and ovary.</text>
</comment>
<comment type="domain">
    <text evidence="1">Intact BH3 motif is required by BIK, BID, BAK, BAD and BAX for their pro-apoptotic activity and for their interaction with anti-apoptotic members of the Bcl-2 family.</text>
</comment>
<comment type="PTM">
    <text evidence="2">Ubiquitinated in the absence of XRCC6/Ku70 (By similarity). Ubiquitinated on Lys-128 and Lys-190. 'Lys-63'-linked polyubiquitin chains on Lys-128 are removed by USP12.</text>
</comment>
<comment type="similarity">
    <text evidence="6">Belongs to the Bcl-2 family.</text>
</comment>
<sequence length="192" mass="21351">MDGSGEQLGGGGPTSSEQIMKTGAFLLQGFIQDRAGRMAGETPELTLEQPPQDASTKKLSECLRRIGDELDSNMELQRMIADVDTDSPREVFFRVAADMFADGNFNWGRVVALFYFASKLVLKALCTKVPELIRTIMGWTLDFLRERLLVWIQDQGGWDGLLSYFGTPTWQTVTIFVAGVLTASLTIWKKMG</sequence>